<organism>
    <name type="scientific">Sus scrofa</name>
    <name type="common">Pig</name>
    <dbReference type="NCBI Taxonomy" id="9823"/>
    <lineage>
        <taxon>Eukaryota</taxon>
        <taxon>Metazoa</taxon>
        <taxon>Chordata</taxon>
        <taxon>Craniata</taxon>
        <taxon>Vertebrata</taxon>
        <taxon>Euteleostomi</taxon>
        <taxon>Mammalia</taxon>
        <taxon>Eutheria</taxon>
        <taxon>Laurasiatheria</taxon>
        <taxon>Artiodactyla</taxon>
        <taxon>Suina</taxon>
        <taxon>Suidae</taxon>
        <taxon>Sus</taxon>
    </lineage>
</organism>
<reference key="1">
    <citation type="journal article" date="1989" name="Nature">
        <title>Molecular cloning and expression of brain-derived neurotrophic factor.</title>
        <authorList>
            <person name="Leibrock J."/>
            <person name="Lottspeich F."/>
            <person name="Hohn A."/>
            <person name="Hofer M."/>
            <person name="Hengerer B."/>
            <person name="Masiakowski P."/>
            <person name="Thoenen H."/>
            <person name="Barde Y.-A."/>
        </authorList>
    </citation>
    <scope>NUCLEOTIDE SEQUENCE [MRNA]</scope>
    <scope>PARTIAL PROTEIN SEQUENCE</scope>
</reference>
<name>BDNF_PIG</name>
<comment type="function">
    <text evidence="1 2">Important signaling molecule that activates signaling cascades downstream of NTRK2 (By similarity). During development, promotes the survival and differentiation of selected neuronal populations of the peripheral and central nervous systems. Participates in axonal growth, pathfinding and in the modulation of dendritic growth and morphology. Major regulator of synaptic transmission and plasticity at adult synapses in many regions of the CNS. The versatility of BDNF is emphasized by its contribution to a range of adaptive neuronal responses including long-term potentiation (LTP), long-term depression (LTD), certain forms of short-term synaptic plasticity, as well as homeostatic regulation of intrinsic neuronal excitability (By similarity).</text>
</comment>
<comment type="function">
    <molecule>Neurotrophic factor BDNF precursor form</molecule>
    <text evidence="1">Important signaling molecule that activates signaling cascades downstream of NTRK2. Activates signaling cascades via the heterodimeric receptor formed by NGFR and SORCS2. Signaling via NGFR and SORCS2 plays a role in synaptic plasticity and long-term depression (LTD). Binding to NGFR and SORCS2 promotes neuronal apoptosis. Promotes neuronal growth cone collapse.</text>
</comment>
<comment type="subunit">
    <text evidence="1 2">Monomers and homodimers (By similarity). Binds to NTRK2/TRKB. Can form heterodimers with other neurotrophin family members, such as NTF3 and NTF4 (in vitro), but the physiological relevance of this is not clear (By similarity). BDNF precursor form: interacts with the heterodimer formed by NGFR and SORCS2. Mature BDNF has much lower affinity for the heterodimer formed by NGFR and SORCS2 (By similarity).</text>
</comment>
<comment type="subcellular location">
    <subcellularLocation>
        <location evidence="2">Secreted</location>
    </subcellularLocation>
</comment>
<comment type="subcellular location">
    <molecule>Neurotrophic factor BDNF precursor form</molecule>
    <subcellularLocation>
        <location evidence="2">Secreted</location>
    </subcellularLocation>
    <text evidence="2">A proportion of BDNF is secreted as immature precursor (proBDNF).</text>
</comment>
<comment type="tissue specificity">
    <text>Brain and central nervous system.</text>
</comment>
<comment type="PTM">
    <molecule>Neurotrophic factor BDNF precursor form</molecule>
    <text evidence="2">N-glycosylated and glycosulfated, contrary to mature BDNF.</text>
</comment>
<comment type="PTM">
    <text evidence="2">Mature BDNF is produced by proteolytic removal of the propeptide, catalyzed by a FURIN family member. In addition, the precursor form is proteolytically cleaved within the propeptide, but this is not an obligatory intermediate for the production of mature BDNF. Can be converted into mature BDNF by plasmin (PLG).</text>
</comment>
<comment type="similarity">
    <text evidence="5">Belongs to the NGF-beta family.</text>
</comment>
<accession>P14082</accession>
<evidence type="ECO:0000250" key="1">
    <source>
        <dbReference type="UniProtKB" id="P21237"/>
    </source>
</evidence>
<evidence type="ECO:0000250" key="2">
    <source>
        <dbReference type="UniProtKB" id="P23560"/>
    </source>
</evidence>
<evidence type="ECO:0000255" key="3"/>
<evidence type="ECO:0000256" key="4">
    <source>
        <dbReference type="SAM" id="MobiDB-lite"/>
    </source>
</evidence>
<evidence type="ECO:0000305" key="5"/>
<sequence>MTILFLTMVISYFGCMKAAPMKEANVRGQGSLAYPGVRTHGTLESVNGPKAGSRGLTSSSSSSLADTFEHVIEELLDEDQKVRPNEENNKDADMYTSRVMLSSQVPLEPPLLFLLEEYKNYLDAANMSMRVRRHSDPARRGELSVCDSISEWVTAADKKTAVDMSGGTVTVLEKVPVSKGQLKQYFYETKCNPMGYTKEGCRGIDKRHWNSQCRTTQSYVRALTMDSKKRIGWRFIRIDTSCVCTLTIKRGR</sequence>
<proteinExistence type="evidence at protein level"/>
<gene>
    <name type="primary">BDNF</name>
</gene>
<dbReference type="EMBL" id="X16713">
    <property type="protein sequence ID" value="CAA34685.1"/>
    <property type="molecule type" value="mRNA"/>
</dbReference>
<dbReference type="PIR" id="A30361">
    <property type="entry name" value="A30361"/>
</dbReference>
<dbReference type="RefSeq" id="NP_999424.1">
    <property type="nucleotide sequence ID" value="NM_214259.2"/>
</dbReference>
<dbReference type="RefSeq" id="XP_005654742.1">
    <property type="nucleotide sequence ID" value="XM_005654685.3"/>
</dbReference>
<dbReference type="RefSeq" id="XP_005654743.1">
    <property type="nucleotide sequence ID" value="XM_005654686.3"/>
</dbReference>
<dbReference type="RefSeq" id="XP_013842732.1">
    <property type="nucleotide sequence ID" value="XM_013987278.2"/>
</dbReference>
<dbReference type="RefSeq" id="XP_020937070.1">
    <property type="nucleotide sequence ID" value="XM_021081411.1"/>
</dbReference>
<dbReference type="SMR" id="P14082"/>
<dbReference type="FunCoup" id="P14082">
    <property type="interactions" value="616"/>
</dbReference>
<dbReference type="STRING" id="9823.ENSSSCP00000046671"/>
<dbReference type="GlyCosmos" id="P14082">
    <property type="glycosylation" value="1 site, No reported glycans"/>
</dbReference>
<dbReference type="GlyGen" id="P14082">
    <property type="glycosylation" value="1 site"/>
</dbReference>
<dbReference type="PaxDb" id="9823-ENSSSCP00000014166"/>
<dbReference type="Ensembl" id="ENSSSCT00000014561.5">
    <property type="protein sequence ID" value="ENSSSCP00000014166.2"/>
    <property type="gene ID" value="ENSSSCG00000013333.5"/>
</dbReference>
<dbReference type="Ensembl" id="ENSSSCT00000053649.2">
    <property type="protein sequence ID" value="ENSSSCP00000058570.1"/>
    <property type="gene ID" value="ENSSSCG00000013333.5"/>
</dbReference>
<dbReference type="Ensembl" id="ENSSSCT00000073803.2">
    <property type="protein sequence ID" value="ENSSSCP00000059903.1"/>
    <property type="gene ID" value="ENSSSCG00000013333.5"/>
</dbReference>
<dbReference type="Ensembl" id="ENSSSCT00015062752.1">
    <property type="protein sequence ID" value="ENSSSCP00015025177.1"/>
    <property type="gene ID" value="ENSSSCG00015046833.1"/>
</dbReference>
<dbReference type="Ensembl" id="ENSSSCT00015063053.1">
    <property type="protein sequence ID" value="ENSSSCP00015025291.1"/>
    <property type="gene ID" value="ENSSSCG00015046833.1"/>
</dbReference>
<dbReference type="Ensembl" id="ENSSSCT00015063388.1">
    <property type="protein sequence ID" value="ENSSSCP00015025409.1"/>
    <property type="gene ID" value="ENSSSCG00015046833.1"/>
</dbReference>
<dbReference type="Ensembl" id="ENSSSCT00025092825.1">
    <property type="protein sequence ID" value="ENSSSCP00025040736.1"/>
    <property type="gene ID" value="ENSSSCG00025067546.1"/>
</dbReference>
<dbReference type="Ensembl" id="ENSSSCT00025092926.1">
    <property type="protein sequence ID" value="ENSSSCP00025040777.1"/>
    <property type="gene ID" value="ENSSSCG00025067546.1"/>
</dbReference>
<dbReference type="Ensembl" id="ENSSSCT00025093020.1">
    <property type="protein sequence ID" value="ENSSSCP00025040821.1"/>
    <property type="gene ID" value="ENSSSCG00025067546.1"/>
</dbReference>
<dbReference type="Ensembl" id="ENSSSCT00030061437.1">
    <property type="protein sequence ID" value="ENSSSCP00030028100.1"/>
    <property type="gene ID" value="ENSSSCG00030044027.1"/>
</dbReference>
<dbReference type="Ensembl" id="ENSSSCT00030061473.1">
    <property type="protein sequence ID" value="ENSSSCP00030028109.1"/>
    <property type="gene ID" value="ENSSSCG00030044027.1"/>
</dbReference>
<dbReference type="Ensembl" id="ENSSSCT00030061511.1">
    <property type="protein sequence ID" value="ENSSSCP00030028130.1"/>
    <property type="gene ID" value="ENSSSCG00030044027.1"/>
</dbReference>
<dbReference type="Ensembl" id="ENSSSCT00035016735.1">
    <property type="protein sequence ID" value="ENSSSCP00035005789.1"/>
    <property type="gene ID" value="ENSSSCG00035013262.1"/>
</dbReference>
<dbReference type="Ensembl" id="ENSSSCT00035016746.1">
    <property type="protein sequence ID" value="ENSSSCP00035005798.1"/>
    <property type="gene ID" value="ENSSSCG00035013262.1"/>
</dbReference>
<dbReference type="Ensembl" id="ENSSSCT00035016754.1">
    <property type="protein sequence ID" value="ENSSSCP00035005804.1"/>
    <property type="gene ID" value="ENSSSCG00035013262.1"/>
</dbReference>
<dbReference type="Ensembl" id="ENSSSCT00045008037.1">
    <property type="protein sequence ID" value="ENSSSCP00045005429.1"/>
    <property type="gene ID" value="ENSSSCG00045004861.1"/>
</dbReference>
<dbReference type="Ensembl" id="ENSSSCT00045008039.1">
    <property type="protein sequence ID" value="ENSSSCP00045005430.1"/>
    <property type="gene ID" value="ENSSSCG00045004861.1"/>
</dbReference>
<dbReference type="Ensembl" id="ENSSSCT00045008041.1">
    <property type="protein sequence ID" value="ENSSSCP00045005432.1"/>
    <property type="gene ID" value="ENSSSCG00045004861.1"/>
</dbReference>
<dbReference type="Ensembl" id="ENSSSCT00050022067.1">
    <property type="protein sequence ID" value="ENSSSCP00050009286.1"/>
    <property type="gene ID" value="ENSSSCG00050016207.1"/>
</dbReference>
<dbReference type="Ensembl" id="ENSSSCT00050022084.1">
    <property type="protein sequence ID" value="ENSSSCP00050009295.1"/>
    <property type="gene ID" value="ENSSSCG00050016207.1"/>
</dbReference>
<dbReference type="Ensembl" id="ENSSSCT00050022110.1">
    <property type="protein sequence ID" value="ENSSSCP00050009311.1"/>
    <property type="gene ID" value="ENSSSCG00050016207.1"/>
</dbReference>
<dbReference type="Ensembl" id="ENSSSCT00055025515.1">
    <property type="protein sequence ID" value="ENSSSCP00055020262.1"/>
    <property type="gene ID" value="ENSSSCG00055012979.1"/>
</dbReference>
<dbReference type="Ensembl" id="ENSSSCT00055025539.1">
    <property type="protein sequence ID" value="ENSSSCP00055020284.1"/>
    <property type="gene ID" value="ENSSSCG00055012979.1"/>
</dbReference>
<dbReference type="Ensembl" id="ENSSSCT00055025549.1">
    <property type="protein sequence ID" value="ENSSSCP00055020294.1"/>
    <property type="gene ID" value="ENSSSCG00055012979.1"/>
</dbReference>
<dbReference type="Ensembl" id="ENSSSCT00060014675.1">
    <property type="protein sequence ID" value="ENSSSCP00060005698.1"/>
    <property type="gene ID" value="ENSSSCG00060011248.1"/>
</dbReference>
<dbReference type="Ensembl" id="ENSSSCT00060014681.1">
    <property type="protein sequence ID" value="ENSSSCP00060005700.1"/>
    <property type="gene ID" value="ENSSSCG00060011248.1"/>
</dbReference>
<dbReference type="Ensembl" id="ENSSSCT00060014687.1">
    <property type="protein sequence ID" value="ENSSSCP00060005702.1"/>
    <property type="gene ID" value="ENSSSCG00060011248.1"/>
</dbReference>
<dbReference type="Ensembl" id="ENSSSCT00065035893.1">
    <property type="protein sequence ID" value="ENSSSCP00065015033.1"/>
    <property type="gene ID" value="ENSSSCG00065026682.1"/>
</dbReference>
<dbReference type="Ensembl" id="ENSSSCT00065035896.1">
    <property type="protein sequence ID" value="ENSSSCP00065015035.1"/>
    <property type="gene ID" value="ENSSSCG00065026682.1"/>
</dbReference>
<dbReference type="Ensembl" id="ENSSSCT00065035899.1">
    <property type="protein sequence ID" value="ENSSSCP00065015036.1"/>
    <property type="gene ID" value="ENSSSCG00065026682.1"/>
</dbReference>
<dbReference type="Ensembl" id="ENSSSCT00070009213.1">
    <property type="protein sequence ID" value="ENSSSCP00070007563.1"/>
    <property type="gene ID" value="ENSSSCG00070004870.1"/>
</dbReference>
<dbReference type="Ensembl" id="ENSSSCT00070009223.1">
    <property type="protein sequence ID" value="ENSSSCP00070007572.1"/>
    <property type="gene ID" value="ENSSSCG00070004870.1"/>
</dbReference>
<dbReference type="Ensembl" id="ENSSSCT00070009245.1">
    <property type="protein sequence ID" value="ENSSSCP00070007590.1"/>
    <property type="gene ID" value="ENSSSCG00070004870.1"/>
</dbReference>
<dbReference type="Ensembl" id="ENSSSCT00085038499">
    <property type="protein sequence ID" value="ENSSSCP00085026743"/>
    <property type="gene ID" value="ENSSSCG00085020209"/>
</dbReference>
<dbReference type="Ensembl" id="ENSSSCT00085038508">
    <property type="protein sequence ID" value="ENSSSCP00085026749"/>
    <property type="gene ID" value="ENSSSCG00085020209"/>
</dbReference>
<dbReference type="Ensembl" id="ENSSSCT00085038510">
    <property type="protein sequence ID" value="ENSSSCP00085026752"/>
    <property type="gene ID" value="ENSSSCG00085020209"/>
</dbReference>
<dbReference type="Ensembl" id="ENSSSCT00085038512">
    <property type="protein sequence ID" value="ENSSSCP00085026754"/>
    <property type="gene ID" value="ENSSSCG00085020209"/>
</dbReference>
<dbReference type="Ensembl" id="ENSSSCT00085038516">
    <property type="protein sequence ID" value="ENSSSCP00085026758"/>
    <property type="gene ID" value="ENSSSCG00085020209"/>
</dbReference>
<dbReference type="Ensembl" id="ENSSSCT00090036581">
    <property type="protein sequence ID" value="ENSSSCP00090022760"/>
    <property type="gene ID" value="ENSSSCG00090020647"/>
</dbReference>
<dbReference type="Ensembl" id="ENSSSCT00090036584">
    <property type="protein sequence ID" value="ENSSSCP00090022763"/>
    <property type="gene ID" value="ENSSSCG00090020647"/>
</dbReference>
<dbReference type="Ensembl" id="ENSSSCT00090036585">
    <property type="protein sequence ID" value="ENSSSCP00090022764"/>
    <property type="gene ID" value="ENSSSCG00090020647"/>
</dbReference>
<dbReference type="Ensembl" id="ENSSSCT00090036588">
    <property type="protein sequence ID" value="ENSSSCP00090022767"/>
    <property type="gene ID" value="ENSSSCG00090020647"/>
</dbReference>
<dbReference type="Ensembl" id="ENSSSCT00090036590">
    <property type="protein sequence ID" value="ENSSSCP00090022768"/>
    <property type="gene ID" value="ENSSSCG00090020647"/>
</dbReference>
<dbReference type="Ensembl" id="ENSSSCT00105058690">
    <property type="protein sequence ID" value="ENSSSCP00105041346"/>
    <property type="gene ID" value="ENSSSCG00105030968"/>
</dbReference>
<dbReference type="Ensembl" id="ENSSSCT00105058716">
    <property type="protein sequence ID" value="ENSSSCP00105041363"/>
    <property type="gene ID" value="ENSSSCG00105030968"/>
</dbReference>
<dbReference type="Ensembl" id="ENSSSCT00105058740">
    <property type="protein sequence ID" value="ENSSSCP00105041378"/>
    <property type="gene ID" value="ENSSSCG00105030968"/>
</dbReference>
<dbReference type="Ensembl" id="ENSSSCT00105058754">
    <property type="protein sequence ID" value="ENSSSCP00105041390"/>
    <property type="gene ID" value="ENSSSCG00105030968"/>
</dbReference>
<dbReference type="Ensembl" id="ENSSSCT00105058853">
    <property type="protein sequence ID" value="ENSSSCP00105041447"/>
    <property type="gene ID" value="ENSSSCG00105030968"/>
</dbReference>
<dbReference type="Ensembl" id="ENSSSCT00110058369">
    <property type="protein sequence ID" value="ENSSSCP00110040670"/>
    <property type="gene ID" value="ENSSSCG00110030555"/>
</dbReference>
<dbReference type="Ensembl" id="ENSSSCT00110058376">
    <property type="protein sequence ID" value="ENSSSCP00110040677"/>
    <property type="gene ID" value="ENSSSCG00110030555"/>
</dbReference>
<dbReference type="Ensembl" id="ENSSSCT00110058381">
    <property type="protein sequence ID" value="ENSSSCP00110040682"/>
    <property type="gene ID" value="ENSSSCG00110030555"/>
</dbReference>
<dbReference type="Ensembl" id="ENSSSCT00110058384">
    <property type="protein sequence ID" value="ENSSSCP00110040685"/>
    <property type="gene ID" value="ENSSSCG00110030555"/>
</dbReference>
<dbReference type="Ensembl" id="ENSSSCT00110058406">
    <property type="protein sequence ID" value="ENSSSCP00110040706"/>
    <property type="gene ID" value="ENSSSCG00110030555"/>
</dbReference>
<dbReference type="Ensembl" id="ENSSSCT00115003975">
    <property type="protein sequence ID" value="ENSSSCP00115003662"/>
    <property type="gene ID" value="ENSSSCG00115002378"/>
</dbReference>
<dbReference type="Ensembl" id="ENSSSCT00130049559">
    <property type="protein sequence ID" value="ENSSSCP00130035117"/>
    <property type="gene ID" value="ENSSSCG00130025527"/>
</dbReference>
<dbReference type="Ensembl" id="ENSSSCT00130049570">
    <property type="protein sequence ID" value="ENSSSCP00130035128"/>
    <property type="gene ID" value="ENSSSCG00130025527"/>
</dbReference>
<dbReference type="Ensembl" id="ENSSSCT00130049583">
    <property type="protein sequence ID" value="ENSSSCP00130035141"/>
    <property type="gene ID" value="ENSSSCG00130025527"/>
</dbReference>
<dbReference type="Ensembl" id="ENSSSCT00130049597">
    <property type="protein sequence ID" value="ENSSSCP00130035154"/>
    <property type="gene ID" value="ENSSSCG00130025527"/>
</dbReference>
<dbReference type="Ensembl" id="ENSSSCT00130049635">
    <property type="protein sequence ID" value="ENSSSCP00130035192"/>
    <property type="gene ID" value="ENSSSCG00130025527"/>
</dbReference>
<dbReference type="GeneID" id="397495"/>
<dbReference type="KEGG" id="ssc:397495"/>
<dbReference type="CTD" id="627"/>
<dbReference type="VGNC" id="VGNC:85795">
    <property type="gene designation" value="BDNF"/>
</dbReference>
<dbReference type="eggNOG" id="ENOG502QRU8">
    <property type="taxonomic scope" value="Eukaryota"/>
</dbReference>
<dbReference type="GeneTree" id="ENSGT00390000007725"/>
<dbReference type="HOGENOM" id="CLU_059942_0_0_1"/>
<dbReference type="InParanoid" id="P14082"/>
<dbReference type="OMA" id="YPGMRTH"/>
<dbReference type="OrthoDB" id="8959386at2759"/>
<dbReference type="TreeFam" id="TF106463"/>
<dbReference type="Reactome" id="R-SSC-1257604">
    <property type="pathway name" value="PIP3 activates AKT signaling"/>
</dbReference>
<dbReference type="Reactome" id="R-SSC-6811558">
    <property type="pathway name" value="PI5P, PP2A and IER3 Regulate PI3K/AKT Signaling"/>
</dbReference>
<dbReference type="Reactome" id="R-SSC-9026527">
    <property type="pathway name" value="Activated NTRK2 signals through PLCG1"/>
</dbReference>
<dbReference type="Reactome" id="R-SSC-9028731">
    <property type="pathway name" value="Activated NTRK2 signals through FRS2 and FRS3"/>
</dbReference>
<dbReference type="Reactome" id="R-SSC-9032759">
    <property type="pathway name" value="NTRK2 activates RAC1"/>
</dbReference>
<dbReference type="Proteomes" id="UP000008227">
    <property type="component" value="Chromosome 2"/>
</dbReference>
<dbReference type="Proteomes" id="UP000314985">
    <property type="component" value="Chromosome 2"/>
</dbReference>
<dbReference type="Proteomes" id="UP000694570">
    <property type="component" value="Unplaced"/>
</dbReference>
<dbReference type="Proteomes" id="UP000694571">
    <property type="component" value="Unplaced"/>
</dbReference>
<dbReference type="Proteomes" id="UP000694720">
    <property type="component" value="Unplaced"/>
</dbReference>
<dbReference type="Proteomes" id="UP000694722">
    <property type="component" value="Unplaced"/>
</dbReference>
<dbReference type="Proteomes" id="UP000694723">
    <property type="component" value="Unplaced"/>
</dbReference>
<dbReference type="Proteomes" id="UP000694724">
    <property type="component" value="Unplaced"/>
</dbReference>
<dbReference type="Proteomes" id="UP000694725">
    <property type="component" value="Unplaced"/>
</dbReference>
<dbReference type="Proteomes" id="UP000694726">
    <property type="component" value="Unplaced"/>
</dbReference>
<dbReference type="Proteomes" id="UP000694727">
    <property type="component" value="Unplaced"/>
</dbReference>
<dbReference type="Proteomes" id="UP000694728">
    <property type="component" value="Unplaced"/>
</dbReference>
<dbReference type="Bgee" id="ENSSSCG00000013333">
    <property type="expression patterns" value="Expressed in Ammon's horn and 27 other cell types or tissues"/>
</dbReference>
<dbReference type="ExpressionAtlas" id="P14082">
    <property type="expression patterns" value="baseline and differential"/>
</dbReference>
<dbReference type="GO" id="GO:0030424">
    <property type="term" value="C:axon"/>
    <property type="evidence" value="ECO:0000318"/>
    <property type="project" value="GO_Central"/>
</dbReference>
<dbReference type="GO" id="GO:0005737">
    <property type="term" value="C:cytoplasm"/>
    <property type="evidence" value="ECO:0000250"/>
    <property type="project" value="UniProtKB"/>
</dbReference>
<dbReference type="GO" id="GO:0030425">
    <property type="term" value="C:dendrite"/>
    <property type="evidence" value="ECO:0000318"/>
    <property type="project" value="GO_Central"/>
</dbReference>
<dbReference type="GO" id="GO:0005615">
    <property type="term" value="C:extracellular space"/>
    <property type="evidence" value="ECO:0000318"/>
    <property type="project" value="GO_Central"/>
</dbReference>
<dbReference type="GO" id="GO:0048471">
    <property type="term" value="C:perinuclear region of cytoplasm"/>
    <property type="evidence" value="ECO:0000250"/>
    <property type="project" value="UniProtKB"/>
</dbReference>
<dbReference type="GO" id="GO:0008021">
    <property type="term" value="C:synaptic vesicle"/>
    <property type="evidence" value="ECO:0000318"/>
    <property type="project" value="GO_Central"/>
</dbReference>
<dbReference type="GO" id="GO:0008083">
    <property type="term" value="F:growth factor activity"/>
    <property type="evidence" value="ECO:0000318"/>
    <property type="project" value="GO_Central"/>
</dbReference>
<dbReference type="GO" id="GO:0005163">
    <property type="term" value="F:nerve growth factor receptor binding"/>
    <property type="evidence" value="ECO:0000318"/>
    <property type="project" value="GO_Central"/>
</dbReference>
<dbReference type="GO" id="GO:0007169">
    <property type="term" value="P:cell surface receptor protein tyrosine kinase signaling pathway"/>
    <property type="evidence" value="ECO:0000318"/>
    <property type="project" value="GO_Central"/>
</dbReference>
<dbReference type="GO" id="GO:0050804">
    <property type="term" value="P:modulation of chemical synaptic transmission"/>
    <property type="evidence" value="ECO:0000318"/>
    <property type="project" value="GO_Central"/>
</dbReference>
<dbReference type="GO" id="GO:0043524">
    <property type="term" value="P:negative regulation of neuron apoptotic process"/>
    <property type="evidence" value="ECO:0000318"/>
    <property type="project" value="GO_Central"/>
</dbReference>
<dbReference type="GO" id="GO:0021675">
    <property type="term" value="P:nerve development"/>
    <property type="evidence" value="ECO:0000318"/>
    <property type="project" value="GO_Central"/>
</dbReference>
<dbReference type="GO" id="GO:0038180">
    <property type="term" value="P:nerve growth factor signaling pathway"/>
    <property type="evidence" value="ECO:0000318"/>
    <property type="project" value="GO_Central"/>
</dbReference>
<dbReference type="GO" id="GO:0048812">
    <property type="term" value="P:neuron projection morphogenesis"/>
    <property type="evidence" value="ECO:0000318"/>
    <property type="project" value="GO_Central"/>
</dbReference>
<dbReference type="FunFam" id="2.10.90.10:FF:000002">
    <property type="entry name" value="Brain-derived neurotrophic factor"/>
    <property type="match status" value="1"/>
</dbReference>
<dbReference type="Gene3D" id="2.10.90.10">
    <property type="entry name" value="Cystine-knot cytokines"/>
    <property type="match status" value="1"/>
</dbReference>
<dbReference type="InterPro" id="IPR020430">
    <property type="entry name" value="Brain-der_neurotrophic_factor"/>
</dbReference>
<dbReference type="InterPro" id="IPR029034">
    <property type="entry name" value="Cystine-knot_cytokine"/>
</dbReference>
<dbReference type="InterPro" id="IPR020408">
    <property type="entry name" value="Nerve_growth_factor-like"/>
</dbReference>
<dbReference type="InterPro" id="IPR002072">
    <property type="entry name" value="Nerve_growth_factor-rel"/>
</dbReference>
<dbReference type="InterPro" id="IPR019846">
    <property type="entry name" value="Nerve_growth_factor_CS"/>
</dbReference>
<dbReference type="PANTHER" id="PTHR11589:SF3">
    <property type="entry name" value="BRAIN-DERIVED NEUROTROPHIC FACTOR"/>
    <property type="match status" value="1"/>
</dbReference>
<dbReference type="PANTHER" id="PTHR11589">
    <property type="entry name" value="NERVE GROWTH FACTOR NGF -RELATED"/>
    <property type="match status" value="1"/>
</dbReference>
<dbReference type="Pfam" id="PF00243">
    <property type="entry name" value="NGF"/>
    <property type="match status" value="1"/>
</dbReference>
<dbReference type="PIRSF" id="PIRSF001789">
    <property type="entry name" value="NGF"/>
    <property type="match status" value="1"/>
</dbReference>
<dbReference type="PRINTS" id="PR01912">
    <property type="entry name" value="BDNFACTOR"/>
</dbReference>
<dbReference type="PRINTS" id="PR00268">
    <property type="entry name" value="NGF"/>
</dbReference>
<dbReference type="SMART" id="SM00140">
    <property type="entry name" value="NGF"/>
    <property type="match status" value="1"/>
</dbReference>
<dbReference type="SUPFAM" id="SSF57501">
    <property type="entry name" value="Cystine-knot cytokines"/>
    <property type="match status" value="1"/>
</dbReference>
<dbReference type="PROSITE" id="PS00248">
    <property type="entry name" value="NGF_1"/>
    <property type="match status" value="1"/>
</dbReference>
<dbReference type="PROSITE" id="PS50270">
    <property type="entry name" value="NGF_2"/>
    <property type="match status" value="1"/>
</dbReference>
<keyword id="KW-0165">Cleavage on pair of basic residues</keyword>
<keyword id="KW-0903">Direct protein sequencing</keyword>
<keyword id="KW-1015">Disulfide bond</keyword>
<keyword id="KW-0325">Glycoprotein</keyword>
<keyword id="KW-0339">Growth factor</keyword>
<keyword id="KW-1185">Reference proteome</keyword>
<keyword id="KW-0964">Secreted</keyword>
<keyword id="KW-0732">Signal</keyword>
<feature type="signal peptide" evidence="3">
    <location>
        <begin position="1"/>
        <end position="18"/>
    </location>
</feature>
<feature type="chain" id="PRO_0000447538" description="Neurotrophic factor BDNF precursor form">
    <location>
        <begin position="19"/>
        <end position="252"/>
    </location>
</feature>
<feature type="propeptide" id="PRO_0000019639" evidence="1">
    <location>
        <begin position="19"/>
        <end position="133"/>
    </location>
</feature>
<feature type="chain" id="PRO_0000019640" description="Neurotrophic factor BDNF">
    <location>
        <begin position="134"/>
        <end position="252"/>
    </location>
</feature>
<feature type="region of interest" description="Disordered" evidence="4">
    <location>
        <begin position="43"/>
        <end position="62"/>
    </location>
</feature>
<feature type="site" description="Cleavage; by MBTPS1" evidence="2">
    <location>
        <begin position="57"/>
        <end position="58"/>
    </location>
</feature>
<feature type="glycosylation site" description="N-linked (GlcNAc...) asparagine" evidence="3">
    <location>
        <position position="126"/>
    </location>
</feature>
<feature type="disulfide bond" evidence="2">
    <location>
        <begin position="146"/>
        <end position="213"/>
    </location>
</feature>
<feature type="disulfide bond" evidence="2">
    <location>
        <begin position="191"/>
        <end position="242"/>
    </location>
</feature>
<feature type="disulfide bond" evidence="2">
    <location>
        <begin position="201"/>
        <end position="244"/>
    </location>
</feature>
<protein>
    <recommendedName>
        <fullName evidence="5">Neurotrophic factor BDNF precursor form</fullName>
        <shortName>proBDNF</shortName>
    </recommendedName>
    <alternativeName>
        <fullName>Brain-derived neurotrophic factor</fullName>
    </alternativeName>
    <component>
        <recommendedName>
            <fullName>Neurotrophic factor BDNF</fullName>
        </recommendedName>
    </component>
</protein>